<comment type="induction">
    <text evidence="1">Up-regulated by growth on type I rhamnogalacturonan.</text>
</comment>
<proteinExistence type="evidence at transcript level"/>
<protein>
    <recommendedName>
        <fullName>Uncharacterized protein YesV</fullName>
    </recommendedName>
</protein>
<evidence type="ECO:0000269" key="1">
    <source>
    </source>
</evidence>
<gene>
    <name type="primary">yesV</name>
    <name type="ordered locus">BSU07040</name>
</gene>
<organism>
    <name type="scientific">Bacillus subtilis (strain 168)</name>
    <dbReference type="NCBI Taxonomy" id="224308"/>
    <lineage>
        <taxon>Bacteria</taxon>
        <taxon>Bacillati</taxon>
        <taxon>Bacillota</taxon>
        <taxon>Bacilli</taxon>
        <taxon>Bacillales</taxon>
        <taxon>Bacillaceae</taxon>
        <taxon>Bacillus</taxon>
    </lineage>
</organism>
<accession>O31525</accession>
<keyword id="KW-1185">Reference proteome</keyword>
<reference key="1">
    <citation type="journal article" date="1997" name="Nature">
        <title>The complete genome sequence of the Gram-positive bacterium Bacillus subtilis.</title>
        <authorList>
            <person name="Kunst F."/>
            <person name="Ogasawara N."/>
            <person name="Moszer I."/>
            <person name="Albertini A.M."/>
            <person name="Alloni G."/>
            <person name="Azevedo V."/>
            <person name="Bertero M.G."/>
            <person name="Bessieres P."/>
            <person name="Bolotin A."/>
            <person name="Borchert S."/>
            <person name="Borriss R."/>
            <person name="Boursier L."/>
            <person name="Brans A."/>
            <person name="Braun M."/>
            <person name="Brignell S.C."/>
            <person name="Bron S."/>
            <person name="Brouillet S."/>
            <person name="Bruschi C.V."/>
            <person name="Caldwell B."/>
            <person name="Capuano V."/>
            <person name="Carter N.M."/>
            <person name="Choi S.-K."/>
            <person name="Codani J.-J."/>
            <person name="Connerton I.F."/>
            <person name="Cummings N.J."/>
            <person name="Daniel R.A."/>
            <person name="Denizot F."/>
            <person name="Devine K.M."/>
            <person name="Duesterhoeft A."/>
            <person name="Ehrlich S.D."/>
            <person name="Emmerson P.T."/>
            <person name="Entian K.-D."/>
            <person name="Errington J."/>
            <person name="Fabret C."/>
            <person name="Ferrari E."/>
            <person name="Foulger D."/>
            <person name="Fritz C."/>
            <person name="Fujita M."/>
            <person name="Fujita Y."/>
            <person name="Fuma S."/>
            <person name="Galizzi A."/>
            <person name="Galleron N."/>
            <person name="Ghim S.-Y."/>
            <person name="Glaser P."/>
            <person name="Goffeau A."/>
            <person name="Golightly E.J."/>
            <person name="Grandi G."/>
            <person name="Guiseppi G."/>
            <person name="Guy B.J."/>
            <person name="Haga K."/>
            <person name="Haiech J."/>
            <person name="Harwood C.R."/>
            <person name="Henaut A."/>
            <person name="Hilbert H."/>
            <person name="Holsappel S."/>
            <person name="Hosono S."/>
            <person name="Hullo M.-F."/>
            <person name="Itaya M."/>
            <person name="Jones L.-M."/>
            <person name="Joris B."/>
            <person name="Karamata D."/>
            <person name="Kasahara Y."/>
            <person name="Klaerr-Blanchard M."/>
            <person name="Klein C."/>
            <person name="Kobayashi Y."/>
            <person name="Koetter P."/>
            <person name="Koningstein G."/>
            <person name="Krogh S."/>
            <person name="Kumano M."/>
            <person name="Kurita K."/>
            <person name="Lapidus A."/>
            <person name="Lardinois S."/>
            <person name="Lauber J."/>
            <person name="Lazarevic V."/>
            <person name="Lee S.-M."/>
            <person name="Levine A."/>
            <person name="Liu H."/>
            <person name="Masuda S."/>
            <person name="Mauel C."/>
            <person name="Medigue C."/>
            <person name="Medina N."/>
            <person name="Mellado R.P."/>
            <person name="Mizuno M."/>
            <person name="Moestl D."/>
            <person name="Nakai S."/>
            <person name="Noback M."/>
            <person name="Noone D."/>
            <person name="O'Reilly M."/>
            <person name="Ogawa K."/>
            <person name="Ogiwara A."/>
            <person name="Oudega B."/>
            <person name="Park S.-H."/>
            <person name="Parro V."/>
            <person name="Pohl T.M."/>
            <person name="Portetelle D."/>
            <person name="Porwollik S."/>
            <person name="Prescott A.M."/>
            <person name="Presecan E."/>
            <person name="Pujic P."/>
            <person name="Purnelle B."/>
            <person name="Rapoport G."/>
            <person name="Rey M."/>
            <person name="Reynolds S."/>
            <person name="Rieger M."/>
            <person name="Rivolta C."/>
            <person name="Rocha E."/>
            <person name="Roche B."/>
            <person name="Rose M."/>
            <person name="Sadaie Y."/>
            <person name="Sato T."/>
            <person name="Scanlan E."/>
            <person name="Schleich S."/>
            <person name="Schroeter R."/>
            <person name="Scoffone F."/>
            <person name="Sekiguchi J."/>
            <person name="Sekowska A."/>
            <person name="Seror S.J."/>
            <person name="Serror P."/>
            <person name="Shin B.-S."/>
            <person name="Soldo B."/>
            <person name="Sorokin A."/>
            <person name="Tacconi E."/>
            <person name="Takagi T."/>
            <person name="Takahashi H."/>
            <person name="Takemaru K."/>
            <person name="Takeuchi M."/>
            <person name="Tamakoshi A."/>
            <person name="Tanaka T."/>
            <person name="Terpstra P."/>
            <person name="Tognoni A."/>
            <person name="Tosato V."/>
            <person name="Uchiyama S."/>
            <person name="Vandenbol M."/>
            <person name="Vannier F."/>
            <person name="Vassarotti A."/>
            <person name="Viari A."/>
            <person name="Wambutt R."/>
            <person name="Wedler E."/>
            <person name="Wedler H."/>
            <person name="Weitzenegger T."/>
            <person name="Winters P."/>
            <person name="Wipat A."/>
            <person name="Yamamoto H."/>
            <person name="Yamane K."/>
            <person name="Yasumoto K."/>
            <person name="Yata K."/>
            <person name="Yoshida K."/>
            <person name="Yoshikawa H.-F."/>
            <person name="Zumstein E."/>
            <person name="Yoshikawa H."/>
            <person name="Danchin A."/>
        </authorList>
    </citation>
    <scope>NUCLEOTIDE SEQUENCE [LARGE SCALE GENOMIC DNA]</scope>
    <source>
        <strain>168</strain>
    </source>
</reference>
<reference key="2">
    <citation type="journal article" date="2007" name="Appl. Environ. Microbiol.">
        <title>Plant cell wall degradation by saprophytic Bacillus subtilis strains: gene clusters responsible for rhamnogalacturonan depolymerization.</title>
        <authorList>
            <person name="Ochiai A."/>
            <person name="Itoh T."/>
            <person name="Kawamata A."/>
            <person name="Hashimoto W."/>
            <person name="Murata K."/>
        </authorList>
    </citation>
    <scope>INDUCTION</scope>
    <source>
        <strain>168</strain>
    </source>
</reference>
<name>YESV_BACSU</name>
<feature type="chain" id="PRO_0000365025" description="Uncharacterized protein YesV">
    <location>
        <begin position="1"/>
        <end position="208"/>
    </location>
</feature>
<dbReference type="EMBL" id="AL009126">
    <property type="protein sequence ID" value="CAB12523.1"/>
    <property type="molecule type" value="Genomic_DNA"/>
</dbReference>
<dbReference type="PIR" id="E69797">
    <property type="entry name" value="E69797"/>
</dbReference>
<dbReference type="RefSeq" id="NP_388585.1">
    <property type="nucleotide sequence ID" value="NC_000964.3"/>
</dbReference>
<dbReference type="RefSeq" id="WP_003233820.1">
    <property type="nucleotide sequence ID" value="NZ_OZ025638.1"/>
</dbReference>
<dbReference type="FunCoup" id="O31525">
    <property type="interactions" value="43"/>
</dbReference>
<dbReference type="STRING" id="224308.BSU07040"/>
<dbReference type="PaxDb" id="224308-BSU07040"/>
<dbReference type="EnsemblBacteria" id="CAB12523">
    <property type="protein sequence ID" value="CAB12523"/>
    <property type="gene ID" value="BSU_07040"/>
</dbReference>
<dbReference type="GeneID" id="936077"/>
<dbReference type="KEGG" id="bsu:BSU07040"/>
<dbReference type="PATRIC" id="fig|224308.179.peg.764"/>
<dbReference type="eggNOG" id="COG5578">
    <property type="taxonomic scope" value="Bacteria"/>
</dbReference>
<dbReference type="InParanoid" id="O31525"/>
<dbReference type="OrthoDB" id="2182676at2"/>
<dbReference type="PhylomeDB" id="O31525"/>
<dbReference type="BioCyc" id="BSUB:BSU07040-MONOMER"/>
<dbReference type="Proteomes" id="UP000001570">
    <property type="component" value="Chromosome"/>
</dbReference>
<dbReference type="InterPro" id="IPR006938">
    <property type="entry name" value="DUF624"/>
</dbReference>
<dbReference type="Pfam" id="PF04854">
    <property type="entry name" value="DUF624"/>
    <property type="match status" value="1"/>
</dbReference>
<sequence>MKTTVTDALYAGCEAVVKIAWLNGLWLLFTLLGGVLFGWAPSTAAMCAVIRKWLMGQKDVPIFSLFLDTYKKEFLKVNAIGLAFSALLLILSANYHYFSASTNWLSFAVTSCTLLAGLLYIIALMYVFPLYVHYQLPLRKYIPQALLFGAMRPLTTGCMLIGCGFVLYLLYTLPGLIPFYGPCLFGLVLMFFALRGFQKTEAQHHQAG</sequence>